<keyword id="KW-0156">Chromatin regulator</keyword>
<keyword id="KW-0158">Chromosome</keyword>
<keyword id="KW-0175">Coiled coil</keyword>
<keyword id="KW-0963">Cytoplasm</keyword>
<keyword id="KW-0217">Developmental protein</keyword>
<keyword id="KW-0221">Differentiation</keyword>
<keyword id="KW-0378">Hydrolase</keyword>
<keyword id="KW-0539">Nucleus</keyword>
<keyword id="KW-0597">Phosphoprotein</keyword>
<keyword id="KW-0645">Protease</keyword>
<keyword id="KW-1185">Reference proteome</keyword>
<keyword id="KW-0788">Thiol protease</keyword>
<keyword id="KW-0832">Ubl conjugation</keyword>
<keyword id="KW-0833">Ubl conjugation pathway</keyword>
<evidence type="ECO:0000250" key="1">
    <source>
        <dbReference type="UniProtKB" id="Q92560"/>
    </source>
</evidence>
<evidence type="ECO:0000250" key="2">
    <source>
        <dbReference type="UniProtKB" id="Q99PU7"/>
    </source>
</evidence>
<evidence type="ECO:0000255" key="3"/>
<evidence type="ECO:0000255" key="4">
    <source>
        <dbReference type="PROSITE-ProRule" id="PRU01393"/>
    </source>
</evidence>
<evidence type="ECO:0000255" key="5">
    <source>
        <dbReference type="PROSITE-ProRule" id="PRU01394"/>
    </source>
</evidence>
<evidence type="ECO:0000256" key="6">
    <source>
        <dbReference type="SAM" id="MobiDB-lite"/>
    </source>
</evidence>
<evidence type="ECO:0000305" key="7"/>
<evidence type="ECO:0007744" key="8">
    <source>
    </source>
</evidence>
<accession>D3ZHS6</accession>
<dbReference type="EC" id="3.4.19.12" evidence="1"/>
<dbReference type="EMBL" id="CH474046">
    <property type="protein sequence ID" value="EDL88955.1"/>
    <property type="status" value="ALT_SEQ"/>
    <property type="molecule type" value="Genomic_DNA"/>
</dbReference>
<dbReference type="RefSeq" id="NP_001100762.1">
    <property type="nucleotide sequence ID" value="NM_001107292.1"/>
</dbReference>
<dbReference type="RefSeq" id="XP_006252668.1">
    <property type="nucleotide sequence ID" value="XM_006252606.5"/>
</dbReference>
<dbReference type="SMR" id="D3ZHS6"/>
<dbReference type="FunCoup" id="D3ZHS6">
    <property type="interactions" value="2549"/>
</dbReference>
<dbReference type="STRING" id="10116.ENSRNOP00000025853"/>
<dbReference type="MEROPS" id="C12.004"/>
<dbReference type="GlyGen" id="D3ZHS6">
    <property type="glycosylation" value="3 sites"/>
</dbReference>
<dbReference type="iPTMnet" id="D3ZHS6"/>
<dbReference type="PhosphoSitePlus" id="D3ZHS6"/>
<dbReference type="jPOST" id="D3ZHS6"/>
<dbReference type="PaxDb" id="10116-ENSRNOP00000025853"/>
<dbReference type="PeptideAtlas" id="D3ZHS6"/>
<dbReference type="GeneID" id="306257"/>
<dbReference type="KEGG" id="rno:306257"/>
<dbReference type="UCSC" id="RGD:1311938">
    <property type="organism name" value="rat"/>
</dbReference>
<dbReference type="AGR" id="RGD:1311938"/>
<dbReference type="CTD" id="8314"/>
<dbReference type="RGD" id="1311938">
    <property type="gene designation" value="Bap1"/>
</dbReference>
<dbReference type="eggNOG" id="KOG2778">
    <property type="taxonomic scope" value="Eukaryota"/>
</dbReference>
<dbReference type="InParanoid" id="D3ZHS6"/>
<dbReference type="OrthoDB" id="1924260at2759"/>
<dbReference type="PhylomeDB" id="D3ZHS6"/>
<dbReference type="TreeFam" id="TF313976"/>
<dbReference type="Reactome" id="R-RNO-5689603">
    <property type="pathway name" value="UCH proteinases"/>
</dbReference>
<dbReference type="Reactome" id="R-RNO-5693565">
    <property type="pathway name" value="Recruitment and ATM-mediated phosphorylation of repair and signaling proteins at DNA double strand breaks"/>
</dbReference>
<dbReference type="PRO" id="PR:D3ZHS6"/>
<dbReference type="Proteomes" id="UP000002494">
    <property type="component" value="Unplaced"/>
</dbReference>
<dbReference type="Proteomes" id="UP000234681">
    <property type="component" value="Chromosome 16"/>
</dbReference>
<dbReference type="GO" id="GO:0005694">
    <property type="term" value="C:chromosome"/>
    <property type="evidence" value="ECO:0007669"/>
    <property type="project" value="UniProtKB-SubCell"/>
</dbReference>
<dbReference type="GO" id="GO:0005737">
    <property type="term" value="C:cytoplasm"/>
    <property type="evidence" value="ECO:0000250"/>
    <property type="project" value="UniProtKB"/>
</dbReference>
<dbReference type="GO" id="GO:0005829">
    <property type="term" value="C:cytosol"/>
    <property type="evidence" value="ECO:0007669"/>
    <property type="project" value="Ensembl"/>
</dbReference>
<dbReference type="GO" id="GO:0005654">
    <property type="term" value="C:nucleoplasm"/>
    <property type="evidence" value="ECO:0007669"/>
    <property type="project" value="Ensembl"/>
</dbReference>
<dbReference type="GO" id="GO:0005634">
    <property type="term" value="C:nucleus"/>
    <property type="evidence" value="ECO:0000250"/>
    <property type="project" value="UniProtKB"/>
</dbReference>
<dbReference type="GO" id="GO:0035517">
    <property type="term" value="C:PR-DUB complex"/>
    <property type="evidence" value="ECO:0000250"/>
    <property type="project" value="UniProtKB"/>
</dbReference>
<dbReference type="GO" id="GO:0003682">
    <property type="term" value="F:chromatin binding"/>
    <property type="evidence" value="ECO:0000250"/>
    <property type="project" value="UniProtKB"/>
</dbReference>
<dbReference type="GO" id="GO:0031490">
    <property type="term" value="F:chromatin DNA binding"/>
    <property type="evidence" value="ECO:0000266"/>
    <property type="project" value="RGD"/>
</dbReference>
<dbReference type="GO" id="GO:0004843">
    <property type="term" value="F:cysteine-type deubiquitinase activity"/>
    <property type="evidence" value="ECO:0000250"/>
    <property type="project" value="UniProtKB"/>
</dbReference>
<dbReference type="GO" id="GO:0140950">
    <property type="term" value="F:histone H2A deubiquitinase activity"/>
    <property type="evidence" value="ECO:0000266"/>
    <property type="project" value="RGD"/>
</dbReference>
<dbReference type="GO" id="GO:0008283">
    <property type="term" value="P:cell population proliferation"/>
    <property type="evidence" value="ECO:0000266"/>
    <property type="project" value="RGD"/>
</dbReference>
<dbReference type="GO" id="GO:0035726">
    <property type="term" value="P:common myeloid progenitor cell proliferation"/>
    <property type="evidence" value="ECO:0000266"/>
    <property type="project" value="RGD"/>
</dbReference>
<dbReference type="GO" id="GO:0030218">
    <property type="term" value="P:erythrocyte differentiation"/>
    <property type="evidence" value="ECO:0000266"/>
    <property type="project" value="RGD"/>
</dbReference>
<dbReference type="GO" id="GO:0043249">
    <property type="term" value="P:erythrocyte maturation"/>
    <property type="evidence" value="ECO:0000266"/>
    <property type="project" value="RGD"/>
</dbReference>
<dbReference type="GO" id="GO:0010467">
    <property type="term" value="P:gene expression"/>
    <property type="evidence" value="ECO:0000266"/>
    <property type="project" value="RGD"/>
</dbReference>
<dbReference type="GO" id="GO:0030851">
    <property type="term" value="P:granulocyte differentiation"/>
    <property type="evidence" value="ECO:0000266"/>
    <property type="project" value="RGD"/>
</dbReference>
<dbReference type="GO" id="GO:0061484">
    <property type="term" value="P:hematopoietic stem cell homeostasis"/>
    <property type="evidence" value="ECO:0000266"/>
    <property type="project" value="RGD"/>
</dbReference>
<dbReference type="GO" id="GO:0031507">
    <property type="term" value="P:heterochromatin formation"/>
    <property type="evidence" value="ECO:0000318"/>
    <property type="project" value="GO_Central"/>
</dbReference>
<dbReference type="GO" id="GO:0001701">
    <property type="term" value="P:in utero embryonic development"/>
    <property type="evidence" value="ECO:0000266"/>
    <property type="project" value="RGD"/>
</dbReference>
<dbReference type="GO" id="GO:0070661">
    <property type="term" value="P:leukocyte proliferation"/>
    <property type="evidence" value="ECO:0000266"/>
    <property type="project" value="RGD"/>
</dbReference>
<dbReference type="GO" id="GO:0061519">
    <property type="term" value="P:macrophage homeostasis"/>
    <property type="evidence" value="ECO:0000266"/>
    <property type="project" value="RGD"/>
</dbReference>
<dbReference type="GO" id="GO:0000278">
    <property type="term" value="P:mitotic cell cycle"/>
    <property type="evidence" value="ECO:0000266"/>
    <property type="project" value="RGD"/>
</dbReference>
<dbReference type="GO" id="GO:0035520">
    <property type="term" value="P:monoubiquitinated protein deubiquitination"/>
    <property type="evidence" value="ECO:0000250"/>
    <property type="project" value="UniProtKB"/>
</dbReference>
<dbReference type="GO" id="GO:0033028">
    <property type="term" value="P:myeloid cell apoptotic process"/>
    <property type="evidence" value="ECO:0000266"/>
    <property type="project" value="RGD"/>
</dbReference>
<dbReference type="GO" id="GO:0045892">
    <property type="term" value="P:negative regulation of DNA-templated transcription"/>
    <property type="evidence" value="ECO:0000250"/>
    <property type="project" value="UniProtKB"/>
</dbReference>
<dbReference type="GO" id="GO:0070050">
    <property type="term" value="P:neuron cellular homeostasis"/>
    <property type="evidence" value="ECO:0000266"/>
    <property type="project" value="RGD"/>
</dbReference>
<dbReference type="GO" id="GO:0030223">
    <property type="term" value="P:neutrophil differentiation"/>
    <property type="evidence" value="ECO:0000266"/>
    <property type="project" value="RGD"/>
</dbReference>
<dbReference type="GO" id="GO:0043363">
    <property type="term" value="P:nucleate erythrocyte differentiation"/>
    <property type="evidence" value="ECO:0000266"/>
    <property type="project" value="RGD"/>
</dbReference>
<dbReference type="GO" id="GO:0036344">
    <property type="term" value="P:platelet morphogenesis"/>
    <property type="evidence" value="ECO:0000266"/>
    <property type="project" value="RGD"/>
</dbReference>
<dbReference type="GO" id="GO:0016579">
    <property type="term" value="P:protein deubiquitination"/>
    <property type="evidence" value="ECO:0000250"/>
    <property type="project" value="UniProtKB"/>
</dbReference>
<dbReference type="GO" id="GO:0071108">
    <property type="term" value="P:protein K48-linked deubiquitination"/>
    <property type="evidence" value="ECO:0000250"/>
    <property type="project" value="UniProtKB"/>
</dbReference>
<dbReference type="GO" id="GO:0051726">
    <property type="term" value="P:regulation of cell cycle"/>
    <property type="evidence" value="ECO:0000250"/>
    <property type="project" value="UniProtKB"/>
</dbReference>
<dbReference type="GO" id="GO:0001558">
    <property type="term" value="P:regulation of cell growth"/>
    <property type="evidence" value="ECO:0000250"/>
    <property type="project" value="UniProtKB"/>
</dbReference>
<dbReference type="GO" id="GO:1900015">
    <property type="term" value="P:regulation of cytokine production involved in inflammatory response"/>
    <property type="evidence" value="ECO:0000266"/>
    <property type="project" value="RGD"/>
</dbReference>
<dbReference type="GO" id="GO:0050727">
    <property type="term" value="P:regulation of inflammatory response"/>
    <property type="evidence" value="ECO:0000266"/>
    <property type="project" value="RGD"/>
</dbReference>
<dbReference type="GO" id="GO:0002574">
    <property type="term" value="P:thrombocyte differentiation"/>
    <property type="evidence" value="ECO:0000266"/>
    <property type="project" value="RGD"/>
</dbReference>
<dbReference type="GO" id="GO:0001894">
    <property type="term" value="P:tissue homeostasis"/>
    <property type="evidence" value="ECO:0000266"/>
    <property type="project" value="RGD"/>
</dbReference>
<dbReference type="GO" id="GO:0006511">
    <property type="term" value="P:ubiquitin-dependent protein catabolic process"/>
    <property type="evidence" value="ECO:0007669"/>
    <property type="project" value="InterPro"/>
</dbReference>
<dbReference type="CDD" id="cd09617">
    <property type="entry name" value="Peptidase_C12_UCH37_BAP1"/>
    <property type="match status" value="1"/>
</dbReference>
<dbReference type="FunFam" id="1.20.58.860:FF:000002">
    <property type="entry name" value="Ubiquitin carboxyl-terminal hydrolase"/>
    <property type="match status" value="1"/>
</dbReference>
<dbReference type="FunFam" id="3.40.532.10:FF:000002">
    <property type="entry name" value="Ubiquitin carboxyl-terminal hydrolase"/>
    <property type="match status" value="1"/>
</dbReference>
<dbReference type="Gene3D" id="1.20.58.860">
    <property type="match status" value="1"/>
</dbReference>
<dbReference type="Gene3D" id="3.40.532.10">
    <property type="entry name" value="Peptidase C12, ubiquitin carboxyl-terminal hydrolase"/>
    <property type="match status" value="1"/>
</dbReference>
<dbReference type="InterPro" id="IPR038765">
    <property type="entry name" value="Papain-like_cys_pep_sf"/>
</dbReference>
<dbReference type="InterPro" id="IPR001578">
    <property type="entry name" value="Peptidase_C12_UCH"/>
</dbReference>
<dbReference type="InterPro" id="IPR036959">
    <property type="entry name" value="Peptidase_C12_UCH_sf"/>
</dbReference>
<dbReference type="InterPro" id="IPR041507">
    <property type="entry name" value="UCH_C"/>
</dbReference>
<dbReference type="PANTHER" id="PTHR10589">
    <property type="entry name" value="UBIQUITIN CARBOXYL-TERMINAL HYDROLASE"/>
    <property type="match status" value="1"/>
</dbReference>
<dbReference type="PANTHER" id="PTHR10589:SF28">
    <property type="entry name" value="UBIQUITIN CARBOXYL-TERMINAL HYDROLASE BAP1"/>
    <property type="match status" value="1"/>
</dbReference>
<dbReference type="Pfam" id="PF01088">
    <property type="entry name" value="Peptidase_C12"/>
    <property type="match status" value="1"/>
</dbReference>
<dbReference type="Pfam" id="PF18031">
    <property type="entry name" value="UCH_C"/>
    <property type="match status" value="1"/>
</dbReference>
<dbReference type="PRINTS" id="PR00707">
    <property type="entry name" value="UBCTHYDRLASE"/>
</dbReference>
<dbReference type="SUPFAM" id="SSF54001">
    <property type="entry name" value="Cysteine proteinases"/>
    <property type="match status" value="1"/>
</dbReference>
<dbReference type="PROSITE" id="PS52048">
    <property type="entry name" value="UCH_DOMAIN"/>
    <property type="match status" value="1"/>
</dbReference>
<dbReference type="PROSITE" id="PS52049">
    <property type="entry name" value="ULD"/>
    <property type="match status" value="1"/>
</dbReference>
<name>BAP1_RAT</name>
<comment type="function">
    <text evidence="1">Deubiquitinating enzyme that plays a key role in chromatin by mediating deubiquitination of histone H2A and HCFC1. Catalytic component of the polycomb repressive deubiquitinase (PR-DUB) complex, a complex that specifically mediates deubiquitination of histone H2A monoubiquitinated at 'Lys-120' (H2AK119ub1). Does not deubiquitinate monoubiquitinated histone H2B. The PR-DUB complex is an epigenetic regulator of gene expression and acts as a transcriptional coactivator, affecting genes involved in development, cell communication, signaling, cell proliferation and cell viability. Antagonizes PRC1 mediated H2AK119ub1 monoubiquitination. As part of the PR-DUB complex, associates with chromatin enriched in histone marks H3K4me1, H3K4me3, and H3K27Ac, but not in H3K27me3. Acts as a regulator of cell growth by mediating deubiquitination of HCFC1 N-terminal and C-terminal chains, with some specificity toward 'Lys-48'-linked polyubiquitin chains compared to 'Lys-63'-linked polyubiquitin chains. Deubiquitination of HCFC1 does not lead to increase stability of HCFC1. Interferes with the BRCA1 and BARD1 heterodimer activity by inhibiting their ability to mediate ubiquitination and autoubiquitination. It however does not mediate deubiquitination of BRCA1 and BARD1. Able to mediate autodeubiquitination via intramolecular interactions to counteract monoubiquitination at the nuclear localization signal (NLS), thereby protecting it from cytoplasmic sequestration. Acts as a tumor suppressor. Negatively regulates epithelial-mesenchymal transition (EMT) of trophoblast stem cells during placental development by regulating genes involved in epithelial cell integrity, cell adhesion and cytoskeletal organization.</text>
</comment>
<comment type="catalytic activity">
    <reaction evidence="1">
        <text>Thiol-dependent hydrolysis of ester, thioester, amide, peptide and isopeptide bonds formed by the C-terminal Gly of ubiquitin (a 76-residue protein attached to proteins as an intracellular targeting signal).</text>
        <dbReference type="EC" id="3.4.19.12"/>
    </reaction>
</comment>
<comment type="subunit">
    <text evidence="1">Core component of the polycomb repressive deubiquitinase (PR-DUB) complex, at least composed of BAP1, one of ASXL1, ASXL2 or (probably) ASXL3, and one of MBD5 or MBD6. The PR-DUB core associates with a number of accessory proteins, including FOXK1, FOXK2, KDM1B, HCFC1, YY1 and OGT; KDM1B specifically associates with ASXL2 PR-DUB complexes. The BAP1 deubiquitinase activity is not required for PR-DUB assembly. Homodimerize (via coiled-coil hinge-region between the UCH and ULD domains) to mediate assembly of 2 copies of the BAP1-ASXL heterodimer into a bisymmetric tetramer; dimerization enhances association with nucleosomes. The PR-DUB complex associates with nucleosomes to mediate deubiquitination of 'lys-120' of histone H2AK118ub1 substrates; the association requires the positively charged C-terminal tail of BAP1. Interacts (via ULD domain) with ASXL1 (via DEUBAD domain); the interaction is direct and forms a ubiquitin binding cleft. The interaction with ASXL1 stabilizes BAP1 but is not required for nucleosome binding. Associates (via C-terminus) with nucleosome and chromatosome complexes through direct interaction with DNA and the histone3/4 dimer; this association displaces the histone-2A C-terminal tail, extending and orienting the H2AK118ub1 substrate towards the BAP1 deubiquitinase active site. Also interacts (via arginine finger) directly with the histone H2A-H2B acidic patch; this interaction is not critical for nucleosome-chromatosome association but may play a role in orienting the H2AK118ub1 substrate towards the PR-DUB complex active site. Interacts with BRCA1 (via the RING finger). Interacts (via HBM-like motif) with HCFC1. Interacts (via a C-terminal region overlapping the ULD domain) with YY1; the interaction is direct and requires the interaction with HCFC1. Interacts (when phosphorylated at Thr-491) with FOXK1. Interacts (when phosphorylated at Thr-491) with FOXK2; leading to recruitment of the PR-DUB complex and repression of FOXK2 target genes. Interacts (via non-classical PY-NLS) with TNPO1/transportin-1 (via HEAT repeats 8-12); the interaction is direct, mediates BAP1 nuclear localization and disrupts BAP1 homodimerization. Interacts (via C-terminus) with KPNA1/importin alpha5 and KPNA2/importin alpha1; these interactions can contribute to BAP1 nuclear localization but are less important than the interaction with TNPO1/transportin-1. The interaction with TNPO1/transportin-1 disrupts homodimerization and blocks ubiquitination by UBE2O.</text>
</comment>
<comment type="subcellular location">
    <subcellularLocation>
        <location evidence="1">Cytoplasm</location>
    </subcellularLocation>
    <subcellularLocation>
        <location evidence="1">Nucleus</location>
    </subcellularLocation>
    <subcellularLocation>
        <location evidence="1">Chromosome</location>
    </subcellularLocation>
    <text evidence="1 2">Mainly nuclear. Binds to chromatin. Localizes to the cytoplasm when monoubiquitinated by the E2/E3 hybrid ubiquitin-protein ligase UBE2O (By similarity). Recruitment to chromatin is dependent on ASXL1/2/3 and recruitment to specific genes on FOXK1/2 (By similarity). Nuclear localization is redundantly mediated by the importin and transportin systems; TNPO1/transportin-1 is the major mediator of nuclear localization (By similarity).</text>
</comment>
<comment type="domain">
    <text evidence="1">Possesses 2 overlapping nuclear localization sequences (NLS), a classic bipartite NLS and a non-classical PY-NLS. The classical NLS probably mediates import via the importin alpha/beta system while the PY-NLS mediates nuclear import via the transportin system.</text>
</comment>
<comment type="domain">
    <text evidence="1">The positively charged C-terminal tail stabilizes the interaction with nucleosomes/chromatosomes through interaction with the DNA backbone. Binding of ASXL1 just upstream of the positively charged C-terminal tail may stabilize its orientation to align the PR-DUB with its H2AK118ub1 substrate.</text>
</comment>
<comment type="domain">
    <text evidence="1">The ubiquitin C-terminal hydrolase (UCH) domain, together with the DEUBAD domain of ASXL1, forms the ubiquitin binding cleft of the PR-DUB complex.</text>
</comment>
<comment type="domain">
    <text evidence="1">The positively charged Arg-finger motif mediates interaction with the histone H2A-H2B acidic patch; this interaction is critical for nucleosomal H2AK119ub1 deubiquitination activity but not nucleosomal binding.</text>
</comment>
<comment type="PTM">
    <text evidence="1">Ubiquitinated: monoubiquitinated at multiple sites within its nuclear localization signal (NLS) BY UBE2O, leading to cytoplasmic retention. Able to mediate autodeubiquitination via intramolecular interactions to counteract cytoplasmic retention. Monoubiquitinated on at least 4 sites near or within its PY-NLS.</text>
</comment>
<comment type="similarity">
    <text evidence="7">Belongs to the peptidase C12 family. BAP1 subfamily.</text>
</comment>
<comment type="sequence caution" evidence="7">
    <conflict type="erroneous gene model prediction">
        <sequence resource="EMBL-CDS" id="EDL88955"/>
    </conflict>
</comment>
<proteinExistence type="evidence at protein level"/>
<gene>
    <name type="primary">Bap1</name>
</gene>
<organism>
    <name type="scientific">Rattus norvegicus</name>
    <name type="common">Rat</name>
    <dbReference type="NCBI Taxonomy" id="10116"/>
    <lineage>
        <taxon>Eukaryota</taxon>
        <taxon>Metazoa</taxon>
        <taxon>Chordata</taxon>
        <taxon>Craniata</taxon>
        <taxon>Vertebrata</taxon>
        <taxon>Euteleostomi</taxon>
        <taxon>Mammalia</taxon>
        <taxon>Eutheria</taxon>
        <taxon>Euarchontoglires</taxon>
        <taxon>Glires</taxon>
        <taxon>Rodentia</taxon>
        <taxon>Myomorpha</taxon>
        <taxon>Muroidea</taxon>
        <taxon>Muridae</taxon>
        <taxon>Murinae</taxon>
        <taxon>Rattus</taxon>
    </lineage>
</organism>
<reference key="1">
    <citation type="submission" date="2005-07" db="EMBL/GenBank/DDBJ databases">
        <authorList>
            <person name="Mural R.J."/>
            <person name="Adams M.D."/>
            <person name="Myers E.W."/>
            <person name="Smith H.O."/>
            <person name="Venter J.C."/>
        </authorList>
    </citation>
    <scope>NUCLEOTIDE SEQUENCE [LARGE SCALE GENOMIC DNA]</scope>
    <source>
        <strain>Brown Norway</strain>
    </source>
</reference>
<reference key="2">
    <citation type="journal article" date="2012" name="Nat. Commun.">
        <title>Quantitative maps of protein phosphorylation sites across 14 different rat organs and tissues.</title>
        <authorList>
            <person name="Lundby A."/>
            <person name="Secher A."/>
            <person name="Lage K."/>
            <person name="Nordsborg N.B."/>
            <person name="Dmytriyev A."/>
            <person name="Lundby C."/>
            <person name="Olsen J.V."/>
        </authorList>
    </citation>
    <scope>PHOSPHORYLATION [LARGE SCALE ANALYSIS] AT SER-292 AND SER-394</scope>
    <scope>IDENTIFICATION BY MASS SPECTROMETRY [LARGE SCALE ANALYSIS]</scope>
</reference>
<sequence>MNKGWLELESDPGLFTLLVEDFGVKGVQVEEIYDLQSKCQGPVYGFIFLFKWIEERRSRRKVSTLVDDTSVIDDDIVNSMFFAHQLIPNSCATHALLSVLLNCSNVDLGPTLSRMKDFTKGFSPESKGYAIGNAPELAKAHNSHARPEPRHLPEKQNGLSAVRTMEAFHFVSYVPITGRLFELDGLKVYPIDHGPWGEDEEWTDKARRVIMERIGLATAGEPYHDIRFNLMAVVPDRRVKYEARLHVLKGNRQTVLEALQQLIRVTQPELIQTHKSQESQLPEESKPASSKSPFGLEAGRTPAASECTHTDGAEEVAGSCPQTTTHSPPSKSKLVVKPSGSSLNGVPPTPTPIVQRLPAFLDNHNYAKSPMQEEEDLAAGVGRSRVPVRPQQYSDDEEDYEDEEEDVQNTSSAIRYKRKGTGKPGSLSNSSDGQLSVLQPNTINVLTEKLQESQKDLSIPLSIKTSSGAGSPAVAVPTHSQPSPTPSNESTDTASEIGSAFNSPLRSPIRSANPTRPSSPVTSHISKVLFGEDDSLLRVDCIRYNRAVRDLGPVISTGLLHLAEDGVLSPLALTEGGKGSSPSTRSSQGSQGSSSLEEKEVVEVTDSRDKSGLNRSSEPLSGEKYSPKELLALLKCVEAEIANYEACLKEEVEKRKKFKIDDQRRTHNYDEFICTFISMLAQEGMLANLVEQNISVRRRQGVSIGRLHKQRKPDRRKRSRPYKAKRQ</sequence>
<protein>
    <recommendedName>
        <fullName>Ubiquitin carboxyl-terminal hydrolase BAP1</fullName>
        <ecNumber evidence="1">3.4.19.12</ecNumber>
    </recommendedName>
    <alternativeName>
        <fullName>BRCA1-associated protein 1</fullName>
    </alternativeName>
</protein>
<feature type="chain" id="PRO_0000395817" description="Ubiquitin carboxyl-terminal hydrolase BAP1">
    <location>
        <begin position="1"/>
        <end position="727"/>
    </location>
</feature>
<feature type="domain" description="UCH catalytic" evidence="4">
    <location>
        <begin position="4"/>
        <end position="235"/>
    </location>
</feature>
<feature type="domain" description="ULD" evidence="5">
    <location>
        <begin position="668"/>
        <end position="696"/>
    </location>
</feature>
<feature type="region of interest" description="Disordered" evidence="6">
    <location>
        <begin position="273"/>
        <end position="351"/>
    </location>
</feature>
<feature type="region of interest" description="Disordered" evidence="6">
    <location>
        <begin position="372"/>
        <end position="435"/>
    </location>
</feature>
<feature type="region of interest" description="Disordered" evidence="6">
    <location>
        <begin position="462"/>
        <end position="522"/>
    </location>
</feature>
<feature type="region of interest" description="Disordered" evidence="6">
    <location>
        <begin position="573"/>
        <end position="622"/>
    </location>
</feature>
<feature type="region of interest" description="Interaction with BRCA1" evidence="1">
    <location>
        <begin position="594"/>
        <end position="719"/>
    </location>
</feature>
<feature type="region of interest" description="Interaction with YY1" evidence="1">
    <location>
        <begin position="640"/>
        <end position="684"/>
    </location>
</feature>
<feature type="region of interest" description="Interaction with nucleosomal DNA forming a DNA clamp with ASXL1" evidence="1">
    <location>
        <begin position="697"/>
        <end position="699"/>
    </location>
</feature>
<feature type="region of interest" description="Disordered" evidence="6">
    <location>
        <begin position="702"/>
        <end position="727"/>
    </location>
</feature>
<feature type="region of interest" description="Positively charged C-terminal extension (CTE)" evidence="1">
    <location>
        <begin position="711"/>
        <end position="727"/>
    </location>
</feature>
<feature type="coiled-coil region" evidence="3">
    <location>
        <begin position="628"/>
        <end position="659"/>
    </location>
</feature>
<feature type="short sequence motif" description="Arg-finger motif" evidence="1">
    <location>
        <begin position="56"/>
        <end position="60"/>
    </location>
</feature>
<feature type="short sequence motif" description="HBM-like motif" evidence="1">
    <location>
        <begin position="363"/>
        <end position="366"/>
    </location>
</feature>
<feature type="short sequence motif" description="Classical bipartite Nuclear localization signal (NLS)" evidence="1">
    <location>
        <begin position="697"/>
        <end position="720"/>
    </location>
</feature>
<feature type="short sequence motif" description="Non-classical PY-nuclear localization signal (PY-NLS)" evidence="1">
    <location>
        <begin position="715"/>
        <end position="722"/>
    </location>
</feature>
<feature type="short sequence motif" description="Nuclear localization signal" evidence="1">
    <location>
        <begin position="715"/>
        <end position="720"/>
    </location>
</feature>
<feature type="compositionally biased region" description="Polar residues" evidence="6">
    <location>
        <begin position="320"/>
        <end position="330"/>
    </location>
</feature>
<feature type="compositionally biased region" description="Acidic residues" evidence="6">
    <location>
        <begin position="394"/>
        <end position="407"/>
    </location>
</feature>
<feature type="compositionally biased region" description="Polar residues" evidence="6">
    <location>
        <begin position="426"/>
        <end position="435"/>
    </location>
</feature>
<feature type="compositionally biased region" description="Polar residues" evidence="6">
    <location>
        <begin position="478"/>
        <end position="522"/>
    </location>
</feature>
<feature type="compositionally biased region" description="Low complexity" evidence="6">
    <location>
        <begin position="580"/>
        <end position="595"/>
    </location>
</feature>
<feature type="compositionally biased region" description="Basic and acidic residues" evidence="6">
    <location>
        <begin position="596"/>
        <end position="612"/>
    </location>
</feature>
<feature type="active site" description="Nucleophile" evidence="4">
    <location>
        <position position="91"/>
    </location>
</feature>
<feature type="active site" description="Proton donor" evidence="4">
    <location>
        <position position="169"/>
    </location>
</feature>
<feature type="site" description="Transition state stabilizer" evidence="4">
    <location>
        <position position="85"/>
    </location>
</feature>
<feature type="site" description="Important for enzyme activity" evidence="4">
    <location>
        <position position="184"/>
    </location>
</feature>
<feature type="modified residue" description="Phosphoserine" evidence="8">
    <location>
        <position position="292"/>
    </location>
</feature>
<feature type="modified residue" description="Phosphoserine" evidence="1">
    <location>
        <position position="369"/>
    </location>
</feature>
<feature type="modified residue" description="Phosphoserine" evidence="8">
    <location>
        <position position="394"/>
    </location>
</feature>
<feature type="modified residue" description="Phosphothreonine" evidence="1">
    <location>
        <position position="491"/>
    </location>
</feature>
<feature type="modified residue" description="Phosphoserine" evidence="1">
    <location>
        <position position="519"/>
    </location>
</feature>
<feature type="modified residue" description="Phosphoserine" evidence="1">
    <location>
        <position position="535"/>
    </location>
</feature>
<feature type="modified residue" description="Phosphoserine" evidence="1">
    <location>
        <position position="583"/>
    </location>
</feature>
<feature type="modified residue" description="Phosphoserine" evidence="1">
    <location>
        <position position="595"/>
    </location>
</feature>